<organism>
    <name type="scientific">Bacillus anthracis (strain CDC 684 / NRRL 3495)</name>
    <dbReference type="NCBI Taxonomy" id="568206"/>
    <lineage>
        <taxon>Bacteria</taxon>
        <taxon>Bacillati</taxon>
        <taxon>Bacillota</taxon>
        <taxon>Bacilli</taxon>
        <taxon>Bacillales</taxon>
        <taxon>Bacillaceae</taxon>
        <taxon>Bacillus</taxon>
        <taxon>Bacillus cereus group</taxon>
    </lineage>
</organism>
<sequence length="340" mass="36593">MTKITVVGAGSWGTALAMVLADNGHDVRIWGNRSELMDEINTKHENSRYLPGITLPSTIVAYSSLEEALVDVNVVLIVVPTKAYREVLQDMKKYVAGPTTWIHASKGIEPGTSKRISEVIEEEIPEDLIKDVVVLSGPSHAEEVGLRQATTVTSAAKRMEAAEEVQDLFMNSYFRVYTNPDIVGVELGGALKNIIALAAGITDGLGLGDNAKAALMTRGLTEIARLGRKMGGNPLTFAGLTGMGDLIVTCTSVHSRNWRAGNMLGKGHSLEEVLESMGMVVEGVRTTKAAHELAEKMEVEMPITAALYDVLFNGNNVKDAVGSLMGRVRKHEVEAIPDLL</sequence>
<gene>
    <name evidence="1" type="primary">gpsA</name>
    <name type="ordered locus">BAMEG_3067</name>
</gene>
<accession>C3L9F3</accession>
<evidence type="ECO:0000255" key="1">
    <source>
        <dbReference type="HAMAP-Rule" id="MF_00394"/>
    </source>
</evidence>
<name>GPDA_BACAC</name>
<protein>
    <recommendedName>
        <fullName evidence="1">Glycerol-3-phosphate dehydrogenase [NAD(P)+]</fullName>
        <ecNumber evidence="1">1.1.1.94</ecNumber>
    </recommendedName>
    <alternativeName>
        <fullName evidence="1">NAD(P)(+)-dependent glycerol-3-phosphate dehydrogenase</fullName>
    </alternativeName>
    <alternativeName>
        <fullName evidence="1">NAD(P)H-dependent dihydroxyacetone-phosphate reductase</fullName>
    </alternativeName>
</protein>
<keyword id="KW-0963">Cytoplasm</keyword>
<keyword id="KW-0444">Lipid biosynthesis</keyword>
<keyword id="KW-0443">Lipid metabolism</keyword>
<keyword id="KW-0520">NAD</keyword>
<keyword id="KW-0521">NADP</keyword>
<keyword id="KW-0547">Nucleotide-binding</keyword>
<keyword id="KW-0560">Oxidoreductase</keyword>
<keyword id="KW-0594">Phospholipid biosynthesis</keyword>
<keyword id="KW-1208">Phospholipid metabolism</keyword>
<reference key="1">
    <citation type="submission" date="2008-10" db="EMBL/GenBank/DDBJ databases">
        <title>Genome sequence of Bacillus anthracis str. CDC 684.</title>
        <authorList>
            <person name="Dodson R.J."/>
            <person name="Munk A.C."/>
            <person name="Brettin T."/>
            <person name="Bruce D."/>
            <person name="Detter C."/>
            <person name="Tapia R."/>
            <person name="Han C."/>
            <person name="Sutton G."/>
            <person name="Sims D."/>
        </authorList>
    </citation>
    <scope>NUCLEOTIDE SEQUENCE [LARGE SCALE GENOMIC DNA]</scope>
    <source>
        <strain>CDC 684 / NRRL 3495</strain>
    </source>
</reference>
<dbReference type="EC" id="1.1.1.94" evidence="1"/>
<dbReference type="EMBL" id="CP001215">
    <property type="protein sequence ID" value="ACP14439.1"/>
    <property type="molecule type" value="Genomic_DNA"/>
</dbReference>
<dbReference type="RefSeq" id="WP_000161771.1">
    <property type="nucleotide sequence ID" value="NC_012581.1"/>
</dbReference>
<dbReference type="SMR" id="C3L9F3"/>
<dbReference type="KEGG" id="bah:BAMEG_3067"/>
<dbReference type="HOGENOM" id="CLU_033449_0_2_9"/>
<dbReference type="UniPathway" id="UPA00940"/>
<dbReference type="GO" id="GO:0005829">
    <property type="term" value="C:cytosol"/>
    <property type="evidence" value="ECO:0007669"/>
    <property type="project" value="TreeGrafter"/>
</dbReference>
<dbReference type="GO" id="GO:0047952">
    <property type="term" value="F:glycerol-3-phosphate dehydrogenase [NAD(P)+] activity"/>
    <property type="evidence" value="ECO:0007669"/>
    <property type="project" value="UniProtKB-UniRule"/>
</dbReference>
<dbReference type="GO" id="GO:0051287">
    <property type="term" value="F:NAD binding"/>
    <property type="evidence" value="ECO:0007669"/>
    <property type="project" value="InterPro"/>
</dbReference>
<dbReference type="GO" id="GO:0005975">
    <property type="term" value="P:carbohydrate metabolic process"/>
    <property type="evidence" value="ECO:0007669"/>
    <property type="project" value="InterPro"/>
</dbReference>
<dbReference type="GO" id="GO:0046167">
    <property type="term" value="P:glycerol-3-phosphate biosynthetic process"/>
    <property type="evidence" value="ECO:0007669"/>
    <property type="project" value="UniProtKB-UniRule"/>
</dbReference>
<dbReference type="GO" id="GO:0046168">
    <property type="term" value="P:glycerol-3-phosphate catabolic process"/>
    <property type="evidence" value="ECO:0007669"/>
    <property type="project" value="InterPro"/>
</dbReference>
<dbReference type="GO" id="GO:0006650">
    <property type="term" value="P:glycerophospholipid metabolic process"/>
    <property type="evidence" value="ECO:0007669"/>
    <property type="project" value="UniProtKB-UniRule"/>
</dbReference>
<dbReference type="GO" id="GO:0008654">
    <property type="term" value="P:phospholipid biosynthetic process"/>
    <property type="evidence" value="ECO:0007669"/>
    <property type="project" value="UniProtKB-KW"/>
</dbReference>
<dbReference type="FunFam" id="1.10.1040.10:FF:000001">
    <property type="entry name" value="Glycerol-3-phosphate dehydrogenase [NAD(P)+]"/>
    <property type="match status" value="1"/>
</dbReference>
<dbReference type="FunFam" id="3.40.50.720:FF:000019">
    <property type="entry name" value="Glycerol-3-phosphate dehydrogenase [NAD(P)+]"/>
    <property type="match status" value="1"/>
</dbReference>
<dbReference type="Gene3D" id="1.10.1040.10">
    <property type="entry name" value="N-(1-d-carboxylethyl)-l-norvaline Dehydrogenase, domain 2"/>
    <property type="match status" value="1"/>
</dbReference>
<dbReference type="Gene3D" id="3.40.50.720">
    <property type="entry name" value="NAD(P)-binding Rossmann-like Domain"/>
    <property type="match status" value="1"/>
</dbReference>
<dbReference type="HAMAP" id="MF_00394">
    <property type="entry name" value="NAD_Glyc3P_dehydrog"/>
    <property type="match status" value="1"/>
</dbReference>
<dbReference type="InterPro" id="IPR008927">
    <property type="entry name" value="6-PGluconate_DH-like_C_sf"/>
</dbReference>
<dbReference type="InterPro" id="IPR013328">
    <property type="entry name" value="6PGD_dom2"/>
</dbReference>
<dbReference type="InterPro" id="IPR006168">
    <property type="entry name" value="G3P_DH_NAD-dep"/>
</dbReference>
<dbReference type="InterPro" id="IPR006109">
    <property type="entry name" value="G3P_DH_NAD-dep_C"/>
</dbReference>
<dbReference type="InterPro" id="IPR011128">
    <property type="entry name" value="G3P_DH_NAD-dep_N"/>
</dbReference>
<dbReference type="InterPro" id="IPR036291">
    <property type="entry name" value="NAD(P)-bd_dom_sf"/>
</dbReference>
<dbReference type="NCBIfam" id="NF000940">
    <property type="entry name" value="PRK00094.1-2"/>
    <property type="match status" value="1"/>
</dbReference>
<dbReference type="NCBIfam" id="NF000941">
    <property type="entry name" value="PRK00094.1-3"/>
    <property type="match status" value="1"/>
</dbReference>
<dbReference type="NCBIfam" id="NF000942">
    <property type="entry name" value="PRK00094.1-4"/>
    <property type="match status" value="1"/>
</dbReference>
<dbReference type="PANTHER" id="PTHR11728">
    <property type="entry name" value="GLYCEROL-3-PHOSPHATE DEHYDROGENASE"/>
    <property type="match status" value="1"/>
</dbReference>
<dbReference type="PANTHER" id="PTHR11728:SF1">
    <property type="entry name" value="GLYCEROL-3-PHOSPHATE DEHYDROGENASE [NAD(+)] 2, CHLOROPLASTIC"/>
    <property type="match status" value="1"/>
</dbReference>
<dbReference type="Pfam" id="PF07479">
    <property type="entry name" value="NAD_Gly3P_dh_C"/>
    <property type="match status" value="1"/>
</dbReference>
<dbReference type="Pfam" id="PF01210">
    <property type="entry name" value="NAD_Gly3P_dh_N"/>
    <property type="match status" value="1"/>
</dbReference>
<dbReference type="PIRSF" id="PIRSF000114">
    <property type="entry name" value="Glycerol-3-P_dh"/>
    <property type="match status" value="1"/>
</dbReference>
<dbReference type="PRINTS" id="PR00077">
    <property type="entry name" value="GPDHDRGNASE"/>
</dbReference>
<dbReference type="SUPFAM" id="SSF48179">
    <property type="entry name" value="6-phosphogluconate dehydrogenase C-terminal domain-like"/>
    <property type="match status" value="1"/>
</dbReference>
<dbReference type="SUPFAM" id="SSF51735">
    <property type="entry name" value="NAD(P)-binding Rossmann-fold domains"/>
    <property type="match status" value="1"/>
</dbReference>
<dbReference type="PROSITE" id="PS00957">
    <property type="entry name" value="NAD_G3PDH"/>
    <property type="match status" value="1"/>
</dbReference>
<comment type="function">
    <text evidence="1">Catalyzes the reduction of the glycolytic intermediate dihydroxyacetone phosphate (DHAP) to sn-glycerol 3-phosphate (G3P), the key precursor for phospholipid synthesis.</text>
</comment>
<comment type="catalytic activity">
    <reaction evidence="1">
        <text>sn-glycerol 3-phosphate + NAD(+) = dihydroxyacetone phosphate + NADH + H(+)</text>
        <dbReference type="Rhea" id="RHEA:11092"/>
        <dbReference type="ChEBI" id="CHEBI:15378"/>
        <dbReference type="ChEBI" id="CHEBI:57540"/>
        <dbReference type="ChEBI" id="CHEBI:57597"/>
        <dbReference type="ChEBI" id="CHEBI:57642"/>
        <dbReference type="ChEBI" id="CHEBI:57945"/>
        <dbReference type="EC" id="1.1.1.94"/>
    </reaction>
    <physiologicalReaction direction="right-to-left" evidence="1">
        <dbReference type="Rhea" id="RHEA:11094"/>
    </physiologicalReaction>
</comment>
<comment type="catalytic activity">
    <reaction evidence="1">
        <text>sn-glycerol 3-phosphate + NADP(+) = dihydroxyacetone phosphate + NADPH + H(+)</text>
        <dbReference type="Rhea" id="RHEA:11096"/>
        <dbReference type="ChEBI" id="CHEBI:15378"/>
        <dbReference type="ChEBI" id="CHEBI:57597"/>
        <dbReference type="ChEBI" id="CHEBI:57642"/>
        <dbReference type="ChEBI" id="CHEBI:57783"/>
        <dbReference type="ChEBI" id="CHEBI:58349"/>
        <dbReference type="EC" id="1.1.1.94"/>
    </reaction>
    <physiologicalReaction direction="right-to-left" evidence="1">
        <dbReference type="Rhea" id="RHEA:11098"/>
    </physiologicalReaction>
</comment>
<comment type="pathway">
    <text evidence="1">Membrane lipid metabolism; glycerophospholipid metabolism.</text>
</comment>
<comment type="subcellular location">
    <subcellularLocation>
        <location evidence="1">Cytoplasm</location>
    </subcellularLocation>
</comment>
<comment type="similarity">
    <text evidence="1">Belongs to the NAD-dependent glycerol-3-phosphate dehydrogenase family.</text>
</comment>
<feature type="chain" id="PRO_1000190119" description="Glycerol-3-phosphate dehydrogenase [NAD(P)+]">
    <location>
        <begin position="1"/>
        <end position="340"/>
    </location>
</feature>
<feature type="active site" description="Proton acceptor" evidence="1">
    <location>
        <position position="192"/>
    </location>
</feature>
<feature type="binding site" evidence="1">
    <location>
        <position position="11"/>
    </location>
    <ligand>
        <name>NADPH</name>
        <dbReference type="ChEBI" id="CHEBI:57783"/>
    </ligand>
</feature>
<feature type="binding site" evidence="1">
    <location>
        <position position="12"/>
    </location>
    <ligand>
        <name>NADPH</name>
        <dbReference type="ChEBI" id="CHEBI:57783"/>
    </ligand>
</feature>
<feature type="binding site" evidence="1">
    <location>
        <position position="33"/>
    </location>
    <ligand>
        <name>NADPH</name>
        <dbReference type="ChEBI" id="CHEBI:57783"/>
    </ligand>
</feature>
<feature type="binding site" evidence="1">
    <location>
        <position position="106"/>
    </location>
    <ligand>
        <name>NADPH</name>
        <dbReference type="ChEBI" id="CHEBI:57783"/>
    </ligand>
</feature>
<feature type="binding site" evidence="1">
    <location>
        <position position="106"/>
    </location>
    <ligand>
        <name>sn-glycerol 3-phosphate</name>
        <dbReference type="ChEBI" id="CHEBI:57597"/>
    </ligand>
</feature>
<feature type="binding site" evidence="1">
    <location>
        <position position="137"/>
    </location>
    <ligand>
        <name>sn-glycerol 3-phosphate</name>
        <dbReference type="ChEBI" id="CHEBI:57597"/>
    </ligand>
</feature>
<feature type="binding site" evidence="1">
    <location>
        <position position="139"/>
    </location>
    <ligand>
        <name>sn-glycerol 3-phosphate</name>
        <dbReference type="ChEBI" id="CHEBI:57597"/>
    </ligand>
</feature>
<feature type="binding site" evidence="1">
    <location>
        <position position="141"/>
    </location>
    <ligand>
        <name>NADPH</name>
        <dbReference type="ChEBI" id="CHEBI:57783"/>
    </ligand>
</feature>
<feature type="binding site" evidence="1">
    <location>
        <position position="192"/>
    </location>
    <ligand>
        <name>sn-glycerol 3-phosphate</name>
        <dbReference type="ChEBI" id="CHEBI:57597"/>
    </ligand>
</feature>
<feature type="binding site" evidence="1">
    <location>
        <position position="245"/>
    </location>
    <ligand>
        <name>sn-glycerol 3-phosphate</name>
        <dbReference type="ChEBI" id="CHEBI:57597"/>
    </ligand>
</feature>
<feature type="binding site" evidence="1">
    <location>
        <position position="255"/>
    </location>
    <ligand>
        <name>sn-glycerol 3-phosphate</name>
        <dbReference type="ChEBI" id="CHEBI:57597"/>
    </ligand>
</feature>
<feature type="binding site" evidence="1">
    <location>
        <position position="256"/>
    </location>
    <ligand>
        <name>NADPH</name>
        <dbReference type="ChEBI" id="CHEBI:57783"/>
    </ligand>
</feature>
<feature type="binding site" evidence="1">
    <location>
        <position position="256"/>
    </location>
    <ligand>
        <name>sn-glycerol 3-phosphate</name>
        <dbReference type="ChEBI" id="CHEBI:57597"/>
    </ligand>
</feature>
<feature type="binding site" evidence="1">
    <location>
        <position position="257"/>
    </location>
    <ligand>
        <name>sn-glycerol 3-phosphate</name>
        <dbReference type="ChEBI" id="CHEBI:57597"/>
    </ligand>
</feature>
<feature type="binding site" evidence="1">
    <location>
        <position position="280"/>
    </location>
    <ligand>
        <name>NADPH</name>
        <dbReference type="ChEBI" id="CHEBI:57783"/>
    </ligand>
</feature>
<feature type="binding site" evidence="1">
    <location>
        <position position="282"/>
    </location>
    <ligand>
        <name>NADPH</name>
        <dbReference type="ChEBI" id="CHEBI:57783"/>
    </ligand>
</feature>
<proteinExistence type="inferred from homology"/>